<sequence length="420" mass="48859">MTKWKRANPNGTRDYLFEECTLIEEVEQKLRLTFLERGYEEIRTPTIEFYDVFAFQNRPIDEEKMYKFFDEKGRIIVLRPDMTIPLARVIGTQRWDTPLKVTYSGNVFRANESHSGKYNEIVQSGIEVIGIDNVRAEIECVISVIQALQKLKVQSFTIEIGQVQLYKCIVKKLSIQDEEERVLRTYIESKNYAALSNFIGEKKLDRCDETVRLLEKLPRLFGNLEVIEEAEKLASSNEMKMAIARVKEMYETIEMLGYGSYISIDLGMIQHLDYYTGVIFKGYIYEIGEEIVSGGRYDELIGNFGEMLPAVGLAVQVNQIVKALQEQQEPYERNQIDIVIHYELNRLAEAERLRNLLRKDGKNAWLSLFSNLSDTFQFARKNKIGTVVEAKNEYLVEYVWNEKWVVQKEGEASCVTFKLR</sequence>
<evidence type="ECO:0000255" key="1">
    <source>
        <dbReference type="HAMAP-Rule" id="MF_00125"/>
    </source>
</evidence>
<proteinExistence type="inferred from homology"/>
<comment type="function">
    <text evidence="1">Required for the first step of histidine biosynthesis. May allow the feedback regulation of ATP phosphoribosyltransferase activity by histidine.</text>
</comment>
<comment type="pathway">
    <text evidence="1">Amino-acid biosynthesis; L-histidine biosynthesis; L-histidine from 5-phospho-alpha-D-ribose 1-diphosphate: step 1/9.</text>
</comment>
<comment type="subunit">
    <text evidence="1">Heteromultimer composed of HisG and HisZ subunits.</text>
</comment>
<comment type="subcellular location">
    <subcellularLocation>
        <location evidence="1">Cytoplasm</location>
    </subcellularLocation>
</comment>
<comment type="miscellaneous">
    <text>This function is generally fulfilled by the C-terminal part of HisG, which is missing in some bacteria such as this one.</text>
</comment>
<comment type="similarity">
    <text evidence="1">Belongs to the class-II aminoacyl-tRNA synthetase family. HisZ subfamily.</text>
</comment>
<dbReference type="EMBL" id="CP001176">
    <property type="protein sequence ID" value="ACK61640.1"/>
    <property type="molecule type" value="Genomic_DNA"/>
</dbReference>
<dbReference type="RefSeq" id="WP_000170296.1">
    <property type="nucleotide sequence ID" value="NC_011725.1"/>
</dbReference>
<dbReference type="SMR" id="B7HHF9"/>
<dbReference type="KEGG" id="bcb:BCB4264_A1457"/>
<dbReference type="HOGENOM" id="CLU_025113_0_0_9"/>
<dbReference type="UniPathway" id="UPA00031">
    <property type="reaction ID" value="UER00006"/>
</dbReference>
<dbReference type="Proteomes" id="UP000007096">
    <property type="component" value="Chromosome"/>
</dbReference>
<dbReference type="GO" id="GO:0005737">
    <property type="term" value="C:cytoplasm"/>
    <property type="evidence" value="ECO:0007669"/>
    <property type="project" value="UniProtKB-SubCell"/>
</dbReference>
<dbReference type="GO" id="GO:0140096">
    <property type="term" value="F:catalytic activity, acting on a protein"/>
    <property type="evidence" value="ECO:0007669"/>
    <property type="project" value="UniProtKB-ARBA"/>
</dbReference>
<dbReference type="GO" id="GO:0004821">
    <property type="term" value="F:histidine-tRNA ligase activity"/>
    <property type="evidence" value="ECO:0007669"/>
    <property type="project" value="TreeGrafter"/>
</dbReference>
<dbReference type="GO" id="GO:0016740">
    <property type="term" value="F:transferase activity"/>
    <property type="evidence" value="ECO:0007669"/>
    <property type="project" value="UniProtKB-ARBA"/>
</dbReference>
<dbReference type="GO" id="GO:0006427">
    <property type="term" value="P:histidyl-tRNA aminoacylation"/>
    <property type="evidence" value="ECO:0007669"/>
    <property type="project" value="TreeGrafter"/>
</dbReference>
<dbReference type="GO" id="GO:0000105">
    <property type="term" value="P:L-histidine biosynthetic process"/>
    <property type="evidence" value="ECO:0007669"/>
    <property type="project" value="UniProtKB-UniRule"/>
</dbReference>
<dbReference type="CDD" id="cd00773">
    <property type="entry name" value="HisRS-like_core"/>
    <property type="match status" value="1"/>
</dbReference>
<dbReference type="FunFam" id="3.30.930.10:FF:000060">
    <property type="entry name" value="ATP phosphoribosyltransferase regulatory subunit"/>
    <property type="match status" value="1"/>
</dbReference>
<dbReference type="Gene3D" id="3.30.930.10">
    <property type="entry name" value="Bira Bifunctional Protein, Domain 2"/>
    <property type="match status" value="1"/>
</dbReference>
<dbReference type="HAMAP" id="MF_00125">
    <property type="entry name" value="HisZ"/>
    <property type="match status" value="1"/>
</dbReference>
<dbReference type="InterPro" id="IPR006195">
    <property type="entry name" value="aa-tRNA-synth_II"/>
</dbReference>
<dbReference type="InterPro" id="IPR045864">
    <property type="entry name" value="aa-tRNA-synth_II/BPL/LPL"/>
</dbReference>
<dbReference type="InterPro" id="IPR041715">
    <property type="entry name" value="HisRS-like_core"/>
</dbReference>
<dbReference type="InterPro" id="IPR004516">
    <property type="entry name" value="HisRS/HisZ"/>
</dbReference>
<dbReference type="InterPro" id="IPR004517">
    <property type="entry name" value="HisZ"/>
</dbReference>
<dbReference type="NCBIfam" id="TIGR00443">
    <property type="entry name" value="hisZ_biosyn_reg"/>
    <property type="match status" value="1"/>
</dbReference>
<dbReference type="NCBIfam" id="NF008938">
    <property type="entry name" value="PRK12292.1-6"/>
    <property type="match status" value="1"/>
</dbReference>
<dbReference type="PANTHER" id="PTHR43707:SF6">
    <property type="entry name" value="ATP PHOSPHORIBOSYLTRANSFERASE REGULATORY SUBUNIT"/>
    <property type="match status" value="1"/>
</dbReference>
<dbReference type="PANTHER" id="PTHR43707">
    <property type="entry name" value="HISTIDYL-TRNA SYNTHETASE"/>
    <property type="match status" value="1"/>
</dbReference>
<dbReference type="Pfam" id="PF13393">
    <property type="entry name" value="tRNA-synt_His"/>
    <property type="match status" value="1"/>
</dbReference>
<dbReference type="PIRSF" id="PIRSF001549">
    <property type="entry name" value="His-tRNA_synth"/>
    <property type="match status" value="1"/>
</dbReference>
<dbReference type="SUPFAM" id="SSF55681">
    <property type="entry name" value="Class II aaRS and biotin synthetases"/>
    <property type="match status" value="1"/>
</dbReference>
<dbReference type="PROSITE" id="PS50862">
    <property type="entry name" value="AA_TRNA_LIGASE_II"/>
    <property type="match status" value="1"/>
</dbReference>
<keyword id="KW-0028">Amino-acid biosynthesis</keyword>
<keyword id="KW-0963">Cytoplasm</keyword>
<keyword id="KW-0368">Histidine biosynthesis</keyword>
<organism>
    <name type="scientific">Bacillus cereus (strain B4264)</name>
    <dbReference type="NCBI Taxonomy" id="405532"/>
    <lineage>
        <taxon>Bacteria</taxon>
        <taxon>Bacillati</taxon>
        <taxon>Bacillota</taxon>
        <taxon>Bacilli</taxon>
        <taxon>Bacillales</taxon>
        <taxon>Bacillaceae</taxon>
        <taxon>Bacillus</taxon>
        <taxon>Bacillus cereus group</taxon>
    </lineage>
</organism>
<protein>
    <recommendedName>
        <fullName evidence="1">ATP phosphoribosyltransferase regulatory subunit</fullName>
    </recommendedName>
</protein>
<name>HISZ_BACC4</name>
<gene>
    <name evidence="1" type="primary">hisZ</name>
    <name type="ordered locus">BCB4264_A1457</name>
</gene>
<reference key="1">
    <citation type="submission" date="2008-10" db="EMBL/GenBank/DDBJ databases">
        <title>Genome sequence of Bacillus cereus B4264.</title>
        <authorList>
            <person name="Dodson R.J."/>
            <person name="Durkin A.S."/>
            <person name="Rosovitz M.J."/>
            <person name="Rasko D.A."/>
            <person name="Hoffmaster A."/>
            <person name="Ravel J."/>
            <person name="Sutton G."/>
        </authorList>
    </citation>
    <scope>NUCLEOTIDE SEQUENCE [LARGE SCALE GENOMIC DNA]</scope>
    <source>
        <strain>B4264</strain>
    </source>
</reference>
<feature type="chain" id="PRO_1000117672" description="ATP phosphoribosyltransferase regulatory subunit">
    <location>
        <begin position="1"/>
        <end position="420"/>
    </location>
</feature>
<accession>B7HHF9</accession>